<feature type="chain" id="PRO_0000301152" description="Sec-independent protein translocase protein TatB">
    <location>
        <begin position="1"/>
        <end position="175"/>
    </location>
</feature>
<feature type="transmembrane region" description="Helical" evidence="1">
    <location>
        <begin position="1"/>
        <end position="21"/>
    </location>
</feature>
<feature type="region of interest" description="Disordered" evidence="2">
    <location>
        <begin position="96"/>
        <end position="115"/>
    </location>
</feature>
<feature type="region of interest" description="Disordered" evidence="2">
    <location>
        <begin position="153"/>
        <end position="175"/>
    </location>
</feature>
<feature type="compositionally biased region" description="Basic residues" evidence="2">
    <location>
        <begin position="160"/>
        <end position="175"/>
    </location>
</feature>
<gene>
    <name evidence="1" type="primary">tatB</name>
    <name type="ordered locus">BMA2702</name>
</gene>
<comment type="function">
    <text evidence="1">Part of the twin-arginine translocation (Tat) system that transports large folded proteins containing a characteristic twin-arginine motif in their signal peptide across membranes. Together with TatC, TatB is part of a receptor directly interacting with Tat signal peptides. TatB may form an oligomeric binding site that transiently accommodates folded Tat precursor proteins before their translocation.</text>
</comment>
<comment type="subunit">
    <text evidence="1">The Tat system comprises two distinct complexes: a TatABC complex, containing multiple copies of TatA, TatB and TatC subunits, and a separate TatA complex, containing only TatA subunits. Substrates initially bind to the TatABC complex, which probably triggers association of the separate TatA complex to form the active translocon.</text>
</comment>
<comment type="subcellular location">
    <subcellularLocation>
        <location evidence="1">Cell inner membrane</location>
        <topology evidence="1">Single-pass membrane protein</topology>
    </subcellularLocation>
</comment>
<comment type="similarity">
    <text evidence="1">Belongs to the TatB family.</text>
</comment>
<dbReference type="EMBL" id="CP000010">
    <property type="protein sequence ID" value="AAU48270.1"/>
    <property type="molecule type" value="Genomic_DNA"/>
</dbReference>
<dbReference type="RefSeq" id="WP_004199901.1">
    <property type="nucleotide sequence ID" value="NC_006348.1"/>
</dbReference>
<dbReference type="RefSeq" id="YP_104223.1">
    <property type="nucleotide sequence ID" value="NC_006348.1"/>
</dbReference>
<dbReference type="SMR" id="Q62GF1"/>
<dbReference type="GeneID" id="92980384"/>
<dbReference type="KEGG" id="bma:BMA2702"/>
<dbReference type="PATRIC" id="fig|243160.12.peg.2772"/>
<dbReference type="eggNOG" id="COG1826">
    <property type="taxonomic scope" value="Bacteria"/>
</dbReference>
<dbReference type="HOGENOM" id="CLU_086034_1_1_4"/>
<dbReference type="Proteomes" id="UP000006693">
    <property type="component" value="Chromosome 1"/>
</dbReference>
<dbReference type="GO" id="GO:0033281">
    <property type="term" value="C:TAT protein transport complex"/>
    <property type="evidence" value="ECO:0007669"/>
    <property type="project" value="UniProtKB-UniRule"/>
</dbReference>
<dbReference type="GO" id="GO:0008320">
    <property type="term" value="F:protein transmembrane transporter activity"/>
    <property type="evidence" value="ECO:0007669"/>
    <property type="project" value="UniProtKB-UniRule"/>
</dbReference>
<dbReference type="GO" id="GO:0043953">
    <property type="term" value="P:protein transport by the Tat complex"/>
    <property type="evidence" value="ECO:0007669"/>
    <property type="project" value="UniProtKB-UniRule"/>
</dbReference>
<dbReference type="Gene3D" id="1.20.5.3310">
    <property type="match status" value="1"/>
</dbReference>
<dbReference type="HAMAP" id="MF_00237">
    <property type="entry name" value="TatB"/>
    <property type="match status" value="1"/>
</dbReference>
<dbReference type="InterPro" id="IPR003369">
    <property type="entry name" value="TatA/B/E"/>
</dbReference>
<dbReference type="InterPro" id="IPR018448">
    <property type="entry name" value="TatB"/>
</dbReference>
<dbReference type="NCBIfam" id="TIGR01410">
    <property type="entry name" value="tatB"/>
    <property type="match status" value="1"/>
</dbReference>
<dbReference type="PANTHER" id="PTHR33162">
    <property type="entry name" value="SEC-INDEPENDENT PROTEIN TRANSLOCASE PROTEIN TATA, CHLOROPLASTIC"/>
    <property type="match status" value="1"/>
</dbReference>
<dbReference type="PANTHER" id="PTHR33162:SF1">
    <property type="entry name" value="SEC-INDEPENDENT PROTEIN TRANSLOCASE PROTEIN TATA, CHLOROPLASTIC"/>
    <property type="match status" value="1"/>
</dbReference>
<dbReference type="Pfam" id="PF02416">
    <property type="entry name" value="TatA_B_E"/>
    <property type="match status" value="1"/>
</dbReference>
<dbReference type="PRINTS" id="PR01506">
    <property type="entry name" value="TATBPROTEIN"/>
</dbReference>
<accession>Q62GF1</accession>
<keyword id="KW-0997">Cell inner membrane</keyword>
<keyword id="KW-1003">Cell membrane</keyword>
<keyword id="KW-0472">Membrane</keyword>
<keyword id="KW-0653">Protein transport</keyword>
<keyword id="KW-1185">Reference proteome</keyword>
<keyword id="KW-0811">Translocation</keyword>
<keyword id="KW-0812">Transmembrane</keyword>
<keyword id="KW-1133">Transmembrane helix</keyword>
<keyword id="KW-0813">Transport</keyword>
<name>TATB_BURMA</name>
<reference key="1">
    <citation type="journal article" date="2004" name="Proc. Natl. Acad. Sci. U.S.A.">
        <title>Structural flexibility in the Burkholderia mallei genome.</title>
        <authorList>
            <person name="Nierman W.C."/>
            <person name="DeShazer D."/>
            <person name="Kim H.S."/>
            <person name="Tettelin H."/>
            <person name="Nelson K.E."/>
            <person name="Feldblyum T.V."/>
            <person name="Ulrich R.L."/>
            <person name="Ronning C.M."/>
            <person name="Brinkac L.M."/>
            <person name="Daugherty S.C."/>
            <person name="Davidsen T.D."/>
            <person name="DeBoy R.T."/>
            <person name="Dimitrov G."/>
            <person name="Dodson R.J."/>
            <person name="Durkin A.S."/>
            <person name="Gwinn M.L."/>
            <person name="Haft D.H."/>
            <person name="Khouri H.M."/>
            <person name="Kolonay J.F."/>
            <person name="Madupu R."/>
            <person name="Mohammoud Y."/>
            <person name="Nelson W.C."/>
            <person name="Radune D."/>
            <person name="Romero C.M."/>
            <person name="Sarria S."/>
            <person name="Selengut J."/>
            <person name="Shamblin C."/>
            <person name="Sullivan S.A."/>
            <person name="White O."/>
            <person name="Yu Y."/>
            <person name="Zafar N."/>
            <person name="Zhou L."/>
            <person name="Fraser C.M."/>
        </authorList>
    </citation>
    <scope>NUCLEOTIDE SEQUENCE [LARGE SCALE GENOMIC DNA]</scope>
    <source>
        <strain>ATCC 23344</strain>
    </source>
</reference>
<evidence type="ECO:0000255" key="1">
    <source>
        <dbReference type="HAMAP-Rule" id="MF_00237"/>
    </source>
</evidence>
<evidence type="ECO:0000256" key="2">
    <source>
        <dbReference type="SAM" id="MobiDB-lite"/>
    </source>
</evidence>
<organism>
    <name type="scientific">Burkholderia mallei (strain ATCC 23344)</name>
    <dbReference type="NCBI Taxonomy" id="243160"/>
    <lineage>
        <taxon>Bacteria</taxon>
        <taxon>Pseudomonadati</taxon>
        <taxon>Pseudomonadota</taxon>
        <taxon>Betaproteobacteria</taxon>
        <taxon>Burkholderiales</taxon>
        <taxon>Burkholderiaceae</taxon>
        <taxon>Burkholderia</taxon>
        <taxon>pseudomallei group</taxon>
    </lineage>
</organism>
<sequence>MLDLGLSKMALIGVVALVVLGPERLPRVARTAGALFGRAQRYINDVKAEVSREIELDALRTMKTDFEQAARNVENTIHDNLREHERDLNAAWNSAVSPGGSAAADAPDGPSAASGELSWRTIATAPAKRRNWRVKKAVTPVWYKRATMRRTQVQSGAARVARHRPASLRRPARFL</sequence>
<proteinExistence type="inferred from homology"/>
<protein>
    <recommendedName>
        <fullName evidence="1">Sec-independent protein translocase protein TatB</fullName>
    </recommendedName>
</protein>